<sequence length="256" mass="26900">MLRIADKTFDSHLFTGTGKFASSQLMVEAIRASGSQLVTLAMKRVDLRQHNDAILEPLIAAGVTLLPNTSGAKTAEEAIFAAHLAREALGTNWLKLEIHPDARWLLPDPIETLKAAEMLVQQGFVVLPYCGADPVLCKRLEEVGCAAVMPLGAPIGSNQGLETRAMLEIIIQQATVPVVVDAGIGVPSHAAQALEMGADAVLVNTAIAVADDPVNMAKAFRLAVEAGLLARQSGPGSRSHFAHATSPLTGFLEASA</sequence>
<name>THIG_ECOHS</name>
<protein>
    <recommendedName>
        <fullName evidence="1">Thiazole synthase</fullName>
        <ecNumber evidence="1">2.8.1.10</ecNumber>
    </recommendedName>
</protein>
<accession>A8A790</accession>
<evidence type="ECO:0000255" key="1">
    <source>
        <dbReference type="HAMAP-Rule" id="MF_00443"/>
    </source>
</evidence>
<reference key="1">
    <citation type="journal article" date="2008" name="J. Bacteriol.">
        <title>The pangenome structure of Escherichia coli: comparative genomic analysis of E. coli commensal and pathogenic isolates.</title>
        <authorList>
            <person name="Rasko D.A."/>
            <person name="Rosovitz M.J."/>
            <person name="Myers G.S.A."/>
            <person name="Mongodin E.F."/>
            <person name="Fricke W.F."/>
            <person name="Gajer P."/>
            <person name="Crabtree J."/>
            <person name="Sebaihia M."/>
            <person name="Thomson N.R."/>
            <person name="Chaudhuri R."/>
            <person name="Henderson I.R."/>
            <person name="Sperandio V."/>
            <person name="Ravel J."/>
        </authorList>
    </citation>
    <scope>NUCLEOTIDE SEQUENCE [LARGE SCALE GENOMIC DNA]</scope>
    <source>
        <strain>HS</strain>
    </source>
</reference>
<keyword id="KW-0963">Cytoplasm</keyword>
<keyword id="KW-0704">Schiff base</keyword>
<keyword id="KW-0784">Thiamine biosynthesis</keyword>
<keyword id="KW-0808">Transferase</keyword>
<proteinExistence type="inferred from homology"/>
<dbReference type="EC" id="2.8.1.10" evidence="1"/>
<dbReference type="EMBL" id="CP000802">
    <property type="protein sequence ID" value="ABV08394.1"/>
    <property type="molecule type" value="Genomic_DNA"/>
</dbReference>
<dbReference type="RefSeq" id="WP_000944094.1">
    <property type="nucleotide sequence ID" value="NC_009800.1"/>
</dbReference>
<dbReference type="SMR" id="A8A790"/>
<dbReference type="GeneID" id="93777904"/>
<dbReference type="KEGG" id="ecx:EcHS_A4224"/>
<dbReference type="HOGENOM" id="CLU_062233_1_0_6"/>
<dbReference type="UniPathway" id="UPA00060"/>
<dbReference type="GO" id="GO:0005737">
    <property type="term" value="C:cytoplasm"/>
    <property type="evidence" value="ECO:0007669"/>
    <property type="project" value="UniProtKB-SubCell"/>
</dbReference>
<dbReference type="GO" id="GO:1990107">
    <property type="term" value="F:thiazole synthase activity"/>
    <property type="evidence" value="ECO:0007669"/>
    <property type="project" value="UniProtKB-EC"/>
</dbReference>
<dbReference type="GO" id="GO:0009229">
    <property type="term" value="P:thiamine diphosphate biosynthetic process"/>
    <property type="evidence" value="ECO:0007669"/>
    <property type="project" value="UniProtKB-UniRule"/>
</dbReference>
<dbReference type="CDD" id="cd04728">
    <property type="entry name" value="ThiG"/>
    <property type="match status" value="1"/>
</dbReference>
<dbReference type="FunFam" id="3.20.20.70:FF:000049">
    <property type="entry name" value="Thiazole synthase"/>
    <property type="match status" value="1"/>
</dbReference>
<dbReference type="Gene3D" id="3.20.20.70">
    <property type="entry name" value="Aldolase class I"/>
    <property type="match status" value="1"/>
</dbReference>
<dbReference type="HAMAP" id="MF_00443">
    <property type="entry name" value="ThiG"/>
    <property type="match status" value="1"/>
</dbReference>
<dbReference type="InterPro" id="IPR013785">
    <property type="entry name" value="Aldolase_TIM"/>
</dbReference>
<dbReference type="InterPro" id="IPR033983">
    <property type="entry name" value="Thiazole_synthase_ThiG"/>
</dbReference>
<dbReference type="InterPro" id="IPR008867">
    <property type="entry name" value="ThiG"/>
</dbReference>
<dbReference type="PANTHER" id="PTHR34266">
    <property type="entry name" value="THIAZOLE SYNTHASE"/>
    <property type="match status" value="1"/>
</dbReference>
<dbReference type="PANTHER" id="PTHR34266:SF2">
    <property type="entry name" value="THIAZOLE SYNTHASE"/>
    <property type="match status" value="1"/>
</dbReference>
<dbReference type="Pfam" id="PF05690">
    <property type="entry name" value="ThiG"/>
    <property type="match status" value="1"/>
</dbReference>
<dbReference type="SUPFAM" id="SSF110399">
    <property type="entry name" value="ThiG-like"/>
    <property type="match status" value="1"/>
</dbReference>
<organism>
    <name type="scientific">Escherichia coli O9:H4 (strain HS)</name>
    <dbReference type="NCBI Taxonomy" id="331112"/>
    <lineage>
        <taxon>Bacteria</taxon>
        <taxon>Pseudomonadati</taxon>
        <taxon>Pseudomonadota</taxon>
        <taxon>Gammaproteobacteria</taxon>
        <taxon>Enterobacterales</taxon>
        <taxon>Enterobacteriaceae</taxon>
        <taxon>Escherichia</taxon>
    </lineage>
</organism>
<comment type="function">
    <text evidence="1">Catalyzes the rearrangement of 1-deoxy-D-xylulose 5-phosphate (DXP) to produce the thiazole phosphate moiety of thiamine. Sulfur is provided by the thiocarboxylate moiety of the carrier protein ThiS. In vitro, sulfur can be provided by H(2)S.</text>
</comment>
<comment type="catalytic activity">
    <reaction evidence="1">
        <text>[ThiS sulfur-carrier protein]-C-terminal-Gly-aminoethanethioate + 2-iminoacetate + 1-deoxy-D-xylulose 5-phosphate = [ThiS sulfur-carrier protein]-C-terminal Gly-Gly + 2-[(2R,5Z)-2-carboxy-4-methylthiazol-5(2H)-ylidene]ethyl phosphate + 2 H2O + H(+)</text>
        <dbReference type="Rhea" id="RHEA:26297"/>
        <dbReference type="Rhea" id="RHEA-COMP:12909"/>
        <dbReference type="Rhea" id="RHEA-COMP:19908"/>
        <dbReference type="ChEBI" id="CHEBI:15377"/>
        <dbReference type="ChEBI" id="CHEBI:15378"/>
        <dbReference type="ChEBI" id="CHEBI:57792"/>
        <dbReference type="ChEBI" id="CHEBI:62899"/>
        <dbReference type="ChEBI" id="CHEBI:77846"/>
        <dbReference type="ChEBI" id="CHEBI:90778"/>
        <dbReference type="ChEBI" id="CHEBI:232372"/>
        <dbReference type="EC" id="2.8.1.10"/>
    </reaction>
</comment>
<comment type="pathway">
    <text evidence="1">Cofactor biosynthesis; thiamine diphosphate biosynthesis.</text>
</comment>
<comment type="subunit">
    <text evidence="1">Homotetramer. Forms heterodimers with either ThiH or ThiS.</text>
</comment>
<comment type="subcellular location">
    <subcellularLocation>
        <location evidence="1">Cytoplasm</location>
    </subcellularLocation>
</comment>
<comment type="similarity">
    <text evidence="1">Belongs to the ThiG family.</text>
</comment>
<feature type="chain" id="PRO_1000060250" description="Thiazole synthase">
    <location>
        <begin position="1"/>
        <end position="256"/>
    </location>
</feature>
<feature type="active site" description="Schiff-base intermediate with DXP" evidence="1">
    <location>
        <position position="95"/>
    </location>
</feature>
<feature type="binding site" evidence="1">
    <location>
        <position position="156"/>
    </location>
    <ligand>
        <name>1-deoxy-D-xylulose 5-phosphate</name>
        <dbReference type="ChEBI" id="CHEBI:57792"/>
    </ligand>
</feature>
<feature type="binding site" evidence="1">
    <location>
        <begin position="182"/>
        <end position="183"/>
    </location>
    <ligand>
        <name>1-deoxy-D-xylulose 5-phosphate</name>
        <dbReference type="ChEBI" id="CHEBI:57792"/>
    </ligand>
</feature>
<feature type="binding site" evidence="1">
    <location>
        <begin position="204"/>
        <end position="205"/>
    </location>
    <ligand>
        <name>1-deoxy-D-xylulose 5-phosphate</name>
        <dbReference type="ChEBI" id="CHEBI:57792"/>
    </ligand>
</feature>
<gene>
    <name evidence="1" type="primary">thiG</name>
    <name type="ordered locus">EcHS_A4224</name>
</gene>